<comment type="function">
    <text evidence="1">Thiolesterase that catalyzes the hydrolysis of S-D-lactoyl-glutathione to form glutathione and D-lactic acid.</text>
</comment>
<comment type="catalytic activity">
    <reaction evidence="1">
        <text>an S-(2-hydroxyacyl)glutathione + H2O = a 2-hydroxy carboxylate + glutathione + H(+)</text>
        <dbReference type="Rhea" id="RHEA:21864"/>
        <dbReference type="ChEBI" id="CHEBI:15377"/>
        <dbReference type="ChEBI" id="CHEBI:15378"/>
        <dbReference type="ChEBI" id="CHEBI:57925"/>
        <dbReference type="ChEBI" id="CHEBI:58896"/>
        <dbReference type="ChEBI" id="CHEBI:71261"/>
        <dbReference type="EC" id="3.1.2.6"/>
    </reaction>
</comment>
<comment type="cofactor">
    <cofactor evidence="1">
        <name>Zn(2+)</name>
        <dbReference type="ChEBI" id="CHEBI:29105"/>
    </cofactor>
    <text evidence="1">Binds 2 Zn(2+) ions per subunit.</text>
</comment>
<comment type="pathway">
    <text evidence="1">Secondary metabolite metabolism; methylglyoxal degradation; (R)-lactate from methylglyoxal: step 2/2.</text>
</comment>
<comment type="subunit">
    <text evidence="1">Monomer.</text>
</comment>
<comment type="similarity">
    <text evidence="1">Belongs to the metallo-beta-lactamase superfamily. Glyoxalase II family.</text>
</comment>
<proteinExistence type="inferred from homology"/>
<evidence type="ECO:0000255" key="1">
    <source>
        <dbReference type="HAMAP-Rule" id="MF_01374"/>
    </source>
</evidence>
<keyword id="KW-0378">Hydrolase</keyword>
<keyword id="KW-0479">Metal-binding</keyword>
<keyword id="KW-0862">Zinc</keyword>
<accession>Q1CFI4</accession>
<accession>C4GWU5</accession>
<organism>
    <name type="scientific">Yersinia pestis bv. Antiqua (strain Nepal516)</name>
    <dbReference type="NCBI Taxonomy" id="377628"/>
    <lineage>
        <taxon>Bacteria</taxon>
        <taxon>Pseudomonadati</taxon>
        <taxon>Pseudomonadota</taxon>
        <taxon>Gammaproteobacteria</taxon>
        <taxon>Enterobacterales</taxon>
        <taxon>Yersiniaceae</taxon>
        <taxon>Yersinia</taxon>
    </lineage>
</organism>
<dbReference type="EC" id="3.1.2.6" evidence="1"/>
<dbReference type="EMBL" id="CP000305">
    <property type="protein sequence ID" value="ABG19246.1"/>
    <property type="molecule type" value="Genomic_DNA"/>
</dbReference>
<dbReference type="EMBL" id="ACNQ01000017">
    <property type="protein sequence ID" value="EEO75395.1"/>
    <property type="molecule type" value="Genomic_DNA"/>
</dbReference>
<dbReference type="PIR" id="AG0132">
    <property type="entry name" value="AG0132"/>
</dbReference>
<dbReference type="RefSeq" id="WP_002210697.1">
    <property type="nucleotide sequence ID" value="NZ_ACNQ01000017.1"/>
</dbReference>
<dbReference type="SMR" id="Q1CFI4"/>
<dbReference type="GeneID" id="57977477"/>
<dbReference type="KEGG" id="ypn:YPN_2919"/>
<dbReference type="HOGENOM" id="CLU_030571_4_1_6"/>
<dbReference type="UniPathway" id="UPA00619">
    <property type="reaction ID" value="UER00676"/>
</dbReference>
<dbReference type="Proteomes" id="UP000008936">
    <property type="component" value="Chromosome"/>
</dbReference>
<dbReference type="GO" id="GO:0004416">
    <property type="term" value="F:hydroxyacylglutathione hydrolase activity"/>
    <property type="evidence" value="ECO:0007669"/>
    <property type="project" value="UniProtKB-UniRule"/>
</dbReference>
<dbReference type="GO" id="GO:0046872">
    <property type="term" value="F:metal ion binding"/>
    <property type="evidence" value="ECO:0007669"/>
    <property type="project" value="UniProtKB-KW"/>
</dbReference>
<dbReference type="GO" id="GO:0019243">
    <property type="term" value="P:methylglyoxal catabolic process to D-lactate via S-lactoyl-glutathione"/>
    <property type="evidence" value="ECO:0007669"/>
    <property type="project" value="InterPro"/>
</dbReference>
<dbReference type="CDD" id="cd07723">
    <property type="entry name" value="hydroxyacylglutathione_hydrolase_MBL-fold"/>
    <property type="match status" value="1"/>
</dbReference>
<dbReference type="Gene3D" id="3.60.15.10">
    <property type="entry name" value="Ribonuclease Z/Hydroxyacylglutathione hydrolase-like"/>
    <property type="match status" value="1"/>
</dbReference>
<dbReference type="HAMAP" id="MF_01374">
    <property type="entry name" value="Glyoxalase_2"/>
    <property type="match status" value="1"/>
</dbReference>
<dbReference type="InterPro" id="IPR035680">
    <property type="entry name" value="Clx_II_MBL"/>
</dbReference>
<dbReference type="InterPro" id="IPR050110">
    <property type="entry name" value="Glyoxalase_II_hydrolase"/>
</dbReference>
<dbReference type="InterPro" id="IPR032282">
    <property type="entry name" value="HAGH_C"/>
</dbReference>
<dbReference type="InterPro" id="IPR017782">
    <property type="entry name" value="Hydroxyacylglutathione_Hdrlase"/>
</dbReference>
<dbReference type="InterPro" id="IPR001279">
    <property type="entry name" value="Metallo-B-lactamas"/>
</dbReference>
<dbReference type="InterPro" id="IPR036866">
    <property type="entry name" value="RibonucZ/Hydroxyglut_hydro"/>
</dbReference>
<dbReference type="NCBIfam" id="TIGR03413">
    <property type="entry name" value="GSH_gloB"/>
    <property type="match status" value="1"/>
</dbReference>
<dbReference type="PANTHER" id="PTHR43705">
    <property type="entry name" value="HYDROXYACYLGLUTATHIONE HYDROLASE"/>
    <property type="match status" value="1"/>
</dbReference>
<dbReference type="PANTHER" id="PTHR43705:SF1">
    <property type="entry name" value="HYDROXYACYLGLUTATHIONE HYDROLASE GLOB"/>
    <property type="match status" value="1"/>
</dbReference>
<dbReference type="Pfam" id="PF16123">
    <property type="entry name" value="HAGH_C"/>
    <property type="match status" value="1"/>
</dbReference>
<dbReference type="Pfam" id="PF00753">
    <property type="entry name" value="Lactamase_B"/>
    <property type="match status" value="1"/>
</dbReference>
<dbReference type="PIRSF" id="PIRSF005457">
    <property type="entry name" value="Glx"/>
    <property type="match status" value="1"/>
</dbReference>
<dbReference type="SMART" id="SM00849">
    <property type="entry name" value="Lactamase_B"/>
    <property type="match status" value="1"/>
</dbReference>
<dbReference type="SUPFAM" id="SSF56281">
    <property type="entry name" value="Metallo-hydrolase/oxidoreductase"/>
    <property type="match status" value="1"/>
</dbReference>
<sequence length="251" mass="27836">MNLISIPAFQDNYIWLLANRQKHCVIVDPGESAPVLATLAQGQYVPQAILLTHHHNDHVGGVADLRHHFPDIPVYGPQETAKKGATVIVNDGDSLTIAGQNYTIIAVPGHTLGHIAYYSSPYLFCGDTLFSAGCGRLLEGTPEQMYASIQRLAQLPDETLICCAHEYTLSNLKFAHAILPADQDIATYQQQIEQLRSKNLPSLPVKLQFERKINVFLRCNDIDLQRKIGTTSPPDSLVSVFCELRSRKDSF</sequence>
<protein>
    <recommendedName>
        <fullName evidence="1">Hydroxyacylglutathione hydrolase</fullName>
        <ecNumber evidence="1">3.1.2.6</ecNumber>
    </recommendedName>
    <alternativeName>
        <fullName evidence="1">Glyoxalase II</fullName>
        <shortName evidence="1">Glx II</shortName>
    </alternativeName>
</protein>
<gene>
    <name evidence="1" type="primary">gloB</name>
    <name type="ordered locus">YPN_2919</name>
    <name type="ORF">YP516_3304</name>
</gene>
<reference key="1">
    <citation type="journal article" date="2006" name="J. Bacteriol.">
        <title>Complete genome sequence of Yersinia pestis strains Antiqua and Nepal516: evidence of gene reduction in an emerging pathogen.</title>
        <authorList>
            <person name="Chain P.S.G."/>
            <person name="Hu P."/>
            <person name="Malfatti S.A."/>
            <person name="Radnedge L."/>
            <person name="Larimer F."/>
            <person name="Vergez L.M."/>
            <person name="Worsham P."/>
            <person name="Chu M.C."/>
            <person name="Andersen G.L."/>
        </authorList>
    </citation>
    <scope>NUCLEOTIDE SEQUENCE [LARGE SCALE GENOMIC DNA]</scope>
    <source>
        <strain>Nepal516</strain>
    </source>
</reference>
<reference key="2">
    <citation type="submission" date="2009-04" db="EMBL/GenBank/DDBJ databases">
        <title>Yersinia pestis Nepal516A whole genome shotgun sequencing project.</title>
        <authorList>
            <person name="Plunkett G. III"/>
            <person name="Anderson B.D."/>
            <person name="Baumler D.J."/>
            <person name="Burland V."/>
            <person name="Cabot E.L."/>
            <person name="Glasner J.D."/>
            <person name="Mau B."/>
            <person name="Neeno-Eckwall E."/>
            <person name="Perna N.T."/>
            <person name="Munk A.C."/>
            <person name="Tapia R."/>
            <person name="Green L.D."/>
            <person name="Rogers Y.C."/>
            <person name="Detter J.C."/>
            <person name="Bruce D.C."/>
            <person name="Brettin T.S."/>
        </authorList>
    </citation>
    <scope>NUCLEOTIDE SEQUENCE [LARGE SCALE GENOMIC DNA]</scope>
    <source>
        <strain>Nepal516</strain>
    </source>
</reference>
<feature type="chain" id="PRO_0000309729" description="Hydroxyacylglutathione hydrolase">
    <location>
        <begin position="1"/>
        <end position="251"/>
    </location>
</feature>
<feature type="binding site" evidence="1">
    <location>
        <position position="53"/>
    </location>
    <ligand>
        <name>Zn(2+)</name>
        <dbReference type="ChEBI" id="CHEBI:29105"/>
        <label>1</label>
    </ligand>
</feature>
<feature type="binding site" evidence="1">
    <location>
        <position position="55"/>
    </location>
    <ligand>
        <name>Zn(2+)</name>
        <dbReference type="ChEBI" id="CHEBI:29105"/>
        <label>1</label>
    </ligand>
</feature>
<feature type="binding site" evidence="1">
    <location>
        <position position="57"/>
    </location>
    <ligand>
        <name>Zn(2+)</name>
        <dbReference type="ChEBI" id="CHEBI:29105"/>
        <label>2</label>
    </ligand>
</feature>
<feature type="binding site" evidence="1">
    <location>
        <position position="58"/>
    </location>
    <ligand>
        <name>Zn(2+)</name>
        <dbReference type="ChEBI" id="CHEBI:29105"/>
        <label>2</label>
    </ligand>
</feature>
<feature type="binding site" evidence="1">
    <location>
        <position position="110"/>
    </location>
    <ligand>
        <name>Zn(2+)</name>
        <dbReference type="ChEBI" id="CHEBI:29105"/>
        <label>1</label>
    </ligand>
</feature>
<feature type="binding site" evidence="1">
    <location>
        <position position="127"/>
    </location>
    <ligand>
        <name>Zn(2+)</name>
        <dbReference type="ChEBI" id="CHEBI:29105"/>
        <label>1</label>
    </ligand>
</feature>
<feature type="binding site" evidence="1">
    <location>
        <position position="127"/>
    </location>
    <ligand>
        <name>Zn(2+)</name>
        <dbReference type="ChEBI" id="CHEBI:29105"/>
        <label>2</label>
    </ligand>
</feature>
<feature type="binding site" evidence="1">
    <location>
        <position position="165"/>
    </location>
    <ligand>
        <name>Zn(2+)</name>
        <dbReference type="ChEBI" id="CHEBI:29105"/>
        <label>2</label>
    </ligand>
</feature>
<name>GLO2_YERPN</name>